<keyword id="KW-0328">Glycosyltransferase</keyword>
<keyword id="KW-0460">Magnesium</keyword>
<keyword id="KW-0479">Metal-binding</keyword>
<keyword id="KW-1185">Reference proteome</keyword>
<keyword id="KW-0808">Transferase</keyword>
<comment type="function">
    <text evidence="1">Catalyzes the transfer of a N-acetyl-glucosamine moiety to 1D-myo-inositol 3-phosphate to produce 1D-myo-inositol 2-acetamido-2-deoxy-glucopyranoside 3-phosphate in the mycothiol biosynthesis pathway.</text>
</comment>
<comment type="catalytic activity">
    <reaction evidence="1">
        <text>1D-myo-inositol 3-phosphate + UDP-N-acetyl-alpha-D-glucosamine = 1D-myo-inositol 2-acetamido-2-deoxy-alpha-D-glucopyranoside 3-phosphate + UDP + H(+)</text>
        <dbReference type="Rhea" id="RHEA:26188"/>
        <dbReference type="ChEBI" id="CHEBI:15378"/>
        <dbReference type="ChEBI" id="CHEBI:57705"/>
        <dbReference type="ChEBI" id="CHEBI:58223"/>
        <dbReference type="ChEBI" id="CHEBI:58401"/>
        <dbReference type="ChEBI" id="CHEBI:58892"/>
        <dbReference type="EC" id="2.4.1.250"/>
    </reaction>
</comment>
<comment type="subunit">
    <text evidence="1">Homodimer.</text>
</comment>
<comment type="similarity">
    <text evidence="1">Belongs to the glycosyltransferase group 1 family. MshA subfamily.</text>
</comment>
<evidence type="ECO:0000255" key="1">
    <source>
        <dbReference type="HAMAP-Rule" id="MF_01695"/>
    </source>
</evidence>
<proteinExistence type="inferred from homology"/>
<dbReference type="EC" id="2.4.1.250" evidence="1"/>
<dbReference type="EMBL" id="CU458896">
    <property type="protein sequence ID" value="CAM64131.1"/>
    <property type="molecule type" value="Genomic_DNA"/>
</dbReference>
<dbReference type="RefSeq" id="WP_005112169.1">
    <property type="nucleotide sequence ID" value="NZ_MLCG01000001.1"/>
</dbReference>
<dbReference type="SMR" id="B1MHQ0"/>
<dbReference type="GeneID" id="93381002"/>
<dbReference type="KEGG" id="mab:MAB_4057c"/>
<dbReference type="Proteomes" id="UP000007137">
    <property type="component" value="Chromosome"/>
</dbReference>
<dbReference type="GO" id="GO:0008375">
    <property type="term" value="F:acetylglucosaminyltransferase activity"/>
    <property type="evidence" value="ECO:0007669"/>
    <property type="project" value="UniProtKB-UniRule"/>
</dbReference>
<dbReference type="GO" id="GO:0102710">
    <property type="term" value="F:D-inositol-3-phosphate glycosyltransferase activity"/>
    <property type="evidence" value="ECO:0007669"/>
    <property type="project" value="UniProtKB-EC"/>
</dbReference>
<dbReference type="GO" id="GO:0000287">
    <property type="term" value="F:magnesium ion binding"/>
    <property type="evidence" value="ECO:0007669"/>
    <property type="project" value="UniProtKB-UniRule"/>
</dbReference>
<dbReference type="GO" id="GO:0008610">
    <property type="term" value="P:lipid biosynthetic process"/>
    <property type="evidence" value="ECO:0007669"/>
    <property type="project" value="UniProtKB-ARBA"/>
</dbReference>
<dbReference type="GO" id="GO:1903509">
    <property type="term" value="P:liposaccharide metabolic process"/>
    <property type="evidence" value="ECO:0007669"/>
    <property type="project" value="UniProtKB-ARBA"/>
</dbReference>
<dbReference type="GO" id="GO:0010125">
    <property type="term" value="P:mycothiol biosynthetic process"/>
    <property type="evidence" value="ECO:0007669"/>
    <property type="project" value="UniProtKB-UniRule"/>
</dbReference>
<dbReference type="CDD" id="cd03800">
    <property type="entry name" value="GT4_sucrose_synthase"/>
    <property type="match status" value="1"/>
</dbReference>
<dbReference type="Gene3D" id="3.40.50.2000">
    <property type="entry name" value="Glycogen Phosphorylase B"/>
    <property type="match status" value="2"/>
</dbReference>
<dbReference type="HAMAP" id="MF_01695">
    <property type="entry name" value="MshA"/>
    <property type="match status" value="1"/>
</dbReference>
<dbReference type="InterPro" id="IPR001296">
    <property type="entry name" value="Glyco_trans_1"/>
</dbReference>
<dbReference type="InterPro" id="IPR028098">
    <property type="entry name" value="Glyco_trans_4-like_N"/>
</dbReference>
<dbReference type="InterPro" id="IPR050194">
    <property type="entry name" value="Glycosyltransferase_grp1"/>
</dbReference>
<dbReference type="InterPro" id="IPR017814">
    <property type="entry name" value="Mycothiol_biosynthesis_MshA"/>
</dbReference>
<dbReference type="NCBIfam" id="TIGR03449">
    <property type="entry name" value="mycothiol_MshA"/>
    <property type="match status" value="1"/>
</dbReference>
<dbReference type="PANTHER" id="PTHR45947">
    <property type="entry name" value="SULFOQUINOVOSYL TRANSFERASE SQD2"/>
    <property type="match status" value="1"/>
</dbReference>
<dbReference type="PANTHER" id="PTHR45947:SF3">
    <property type="entry name" value="SULFOQUINOVOSYL TRANSFERASE SQD2"/>
    <property type="match status" value="1"/>
</dbReference>
<dbReference type="Pfam" id="PF13579">
    <property type="entry name" value="Glyco_trans_4_4"/>
    <property type="match status" value="1"/>
</dbReference>
<dbReference type="Pfam" id="PF00534">
    <property type="entry name" value="Glycos_transf_1"/>
    <property type="match status" value="1"/>
</dbReference>
<dbReference type="SUPFAM" id="SSF53756">
    <property type="entry name" value="UDP-Glycosyltransferase/glycogen phosphorylase"/>
    <property type="match status" value="1"/>
</dbReference>
<organism>
    <name type="scientific">Mycobacteroides abscessus (strain ATCC 19977 / DSM 44196 / CCUG 20993 / CIP 104536 / JCM 13569 / NCTC 13031 / TMC 1543 / L948)</name>
    <name type="common">Mycobacterium abscessus</name>
    <dbReference type="NCBI Taxonomy" id="561007"/>
    <lineage>
        <taxon>Bacteria</taxon>
        <taxon>Bacillati</taxon>
        <taxon>Actinomycetota</taxon>
        <taxon>Actinomycetes</taxon>
        <taxon>Mycobacteriales</taxon>
        <taxon>Mycobacteriaceae</taxon>
        <taxon>Mycobacteroides</taxon>
        <taxon>Mycobacteroides abscessus</taxon>
    </lineage>
</organism>
<reference key="1">
    <citation type="journal article" date="2009" name="PLoS ONE">
        <title>Non mycobacterial virulence genes in the genome of the emerging pathogen Mycobacterium abscessus.</title>
        <authorList>
            <person name="Ripoll F."/>
            <person name="Pasek S."/>
            <person name="Schenowitz C."/>
            <person name="Dossat C."/>
            <person name="Barbe V."/>
            <person name="Rottman M."/>
            <person name="Macheras E."/>
            <person name="Heym B."/>
            <person name="Herrmann J.L."/>
            <person name="Daffe M."/>
            <person name="Brosch R."/>
            <person name="Risler J.L."/>
            <person name="Gaillard J.L."/>
        </authorList>
    </citation>
    <scope>NUCLEOTIDE SEQUENCE [LARGE SCALE GENOMIC DNA]</scope>
    <source>
        <strain>ATCC 19977 / DSM 44196 / CCUG 20993 / CIP 104536 / JCM 13569 / NCTC 13031 / TMC 1543 / L948</strain>
    </source>
</reference>
<sequence>MLSGDEFARRAVAALKPRRIAVLSVHTSPLAQPGTGDAGGMNVYVLQTALQLARRGVAVDIFTRATSSSDEPVVSVTDGVTVRNIVAGPFEGLDKYDLPTQLCAFTAGVLRAEAVHEPGYYNLVHSHYWLSGQAGWLARDRWGVPLVHTAHTLAAVKNQTLAEGDRPEPALRGVGEQQVVDEADRLIVNTKDEADQLVSIHNADPARIDIVHPGVDLDVFTPGDKAAARAEFGLRADEQVVAFVGRIQPLKAPDLLVRAAERLPGVRVLIVGGPSGSGLDEPTALQDLAVDLGIADRVTFLPPQTRERLAQVYRAADIVAVPSYSESFGLVAIEAQACGTPVVAAAVGGLPVAVADQRTGLLVPTHRTEDWADAIGELLVRKGAGFSRAAVEHAAGFSWSSTADSLLSSYGRAIADYRAPQRPSTQWASRARFRPRRLSGLRR</sequence>
<feature type="chain" id="PRO_0000400131" description="D-inositol 3-phosphate glycosyltransferase">
    <location>
        <begin position="1"/>
        <end position="443"/>
    </location>
</feature>
<feature type="binding site" evidence="1">
    <location>
        <position position="26"/>
    </location>
    <ligand>
        <name>1D-myo-inositol 3-phosphate</name>
        <dbReference type="ChEBI" id="CHEBI:58401"/>
    </ligand>
</feature>
<feature type="binding site" evidence="1">
    <location>
        <begin position="32"/>
        <end position="33"/>
    </location>
    <ligand>
        <name>UDP-N-acetyl-alpha-D-glucosamine</name>
        <dbReference type="ChEBI" id="CHEBI:57705"/>
    </ligand>
</feature>
<feature type="binding site" evidence="1">
    <location>
        <begin position="37"/>
        <end position="42"/>
    </location>
    <ligand>
        <name>1D-myo-inositol 3-phosphate</name>
        <dbReference type="ChEBI" id="CHEBI:58401"/>
    </ligand>
</feature>
<feature type="binding site" evidence="1">
    <location>
        <position position="40"/>
    </location>
    <ligand>
        <name>UDP-N-acetyl-alpha-D-glucosamine</name>
        <dbReference type="ChEBI" id="CHEBI:57705"/>
    </ligand>
</feature>
<feature type="binding site" evidence="1">
    <location>
        <position position="95"/>
    </location>
    <ligand>
        <name>1D-myo-inositol 3-phosphate</name>
        <dbReference type="ChEBI" id="CHEBI:58401"/>
    </ligand>
</feature>
<feature type="binding site" evidence="1">
    <location>
        <position position="128"/>
    </location>
    <ligand>
        <name>1D-myo-inositol 3-phosphate</name>
        <dbReference type="ChEBI" id="CHEBI:58401"/>
    </ligand>
</feature>
<feature type="binding site" evidence="1">
    <location>
        <position position="152"/>
    </location>
    <ligand>
        <name>1D-myo-inositol 3-phosphate</name>
        <dbReference type="ChEBI" id="CHEBI:58401"/>
    </ligand>
</feature>
<feature type="binding site" evidence="1">
    <location>
        <position position="172"/>
    </location>
    <ligand>
        <name>1D-myo-inositol 3-phosphate</name>
        <dbReference type="ChEBI" id="CHEBI:58401"/>
    </ligand>
</feature>
<feature type="binding site" evidence="1">
    <location>
        <position position="246"/>
    </location>
    <ligand>
        <name>UDP-N-acetyl-alpha-D-glucosamine</name>
        <dbReference type="ChEBI" id="CHEBI:57705"/>
    </ligand>
</feature>
<feature type="binding site" evidence="1">
    <location>
        <position position="251"/>
    </location>
    <ligand>
        <name>UDP-N-acetyl-alpha-D-glucosamine</name>
        <dbReference type="ChEBI" id="CHEBI:57705"/>
    </ligand>
</feature>
<feature type="binding site" evidence="1">
    <location>
        <position position="304"/>
    </location>
    <ligand>
        <name>UDP-N-acetyl-alpha-D-glucosamine</name>
        <dbReference type="ChEBI" id="CHEBI:57705"/>
    </ligand>
</feature>
<feature type="binding site" evidence="1">
    <location>
        <position position="313"/>
    </location>
    <ligand>
        <name>Mg(2+)</name>
        <dbReference type="ChEBI" id="CHEBI:18420"/>
    </ligand>
</feature>
<feature type="binding site" evidence="1">
    <location>
        <position position="314"/>
    </location>
    <ligand>
        <name>Mg(2+)</name>
        <dbReference type="ChEBI" id="CHEBI:18420"/>
    </ligand>
</feature>
<feature type="binding site" evidence="1">
    <location>
        <position position="316"/>
    </location>
    <ligand>
        <name>Mg(2+)</name>
        <dbReference type="ChEBI" id="CHEBI:18420"/>
    </ligand>
</feature>
<feature type="binding site" evidence="1">
    <location>
        <position position="326"/>
    </location>
    <ligand>
        <name>UDP-N-acetyl-alpha-D-glucosamine</name>
        <dbReference type="ChEBI" id="CHEBI:57705"/>
    </ligand>
</feature>
<feature type="binding site" evidence="1">
    <location>
        <position position="334"/>
    </location>
    <ligand>
        <name>UDP-N-acetyl-alpha-D-glucosamine</name>
        <dbReference type="ChEBI" id="CHEBI:57705"/>
    </ligand>
</feature>
<feature type="binding site" evidence="1">
    <location>
        <position position="340"/>
    </location>
    <ligand>
        <name>Mg(2+)</name>
        <dbReference type="ChEBI" id="CHEBI:18420"/>
    </ligand>
</feature>
<protein>
    <recommendedName>
        <fullName>D-inositol 3-phosphate glycosyltransferase</fullName>
        <ecNumber evidence="1">2.4.1.250</ecNumber>
    </recommendedName>
    <alternativeName>
        <fullName evidence="1">N-acetylglucosamine-inositol-phosphate N-acetylglucosaminyltransferase</fullName>
        <shortName evidence="1">GlcNAc-Ins-P N-acetylglucosaminyltransferase</shortName>
    </alternativeName>
</protein>
<name>MSHA_MYCA9</name>
<accession>B1MHQ0</accession>
<gene>
    <name evidence="1" type="primary">mshA</name>
    <name type="ordered locus">MAB_4057c</name>
</gene>